<proteinExistence type="inferred from homology"/>
<dbReference type="EMBL" id="CP000469">
    <property type="protein sequence ID" value="ABK46467.1"/>
    <property type="molecule type" value="Genomic_DNA"/>
</dbReference>
<dbReference type="RefSeq" id="WP_011715468.1">
    <property type="nucleotide sequence ID" value="NC_008577.1"/>
</dbReference>
<dbReference type="SMR" id="A0KRP8"/>
<dbReference type="STRING" id="94122.Shewana3_0223"/>
<dbReference type="GeneID" id="94726210"/>
<dbReference type="KEGG" id="shn:Shewana3_0223"/>
<dbReference type="eggNOG" id="COG0522">
    <property type="taxonomic scope" value="Bacteria"/>
</dbReference>
<dbReference type="HOGENOM" id="CLU_092403_0_2_6"/>
<dbReference type="OrthoDB" id="9803672at2"/>
<dbReference type="Proteomes" id="UP000002589">
    <property type="component" value="Chromosome"/>
</dbReference>
<dbReference type="GO" id="GO:0015935">
    <property type="term" value="C:small ribosomal subunit"/>
    <property type="evidence" value="ECO:0007669"/>
    <property type="project" value="InterPro"/>
</dbReference>
<dbReference type="GO" id="GO:0019843">
    <property type="term" value="F:rRNA binding"/>
    <property type="evidence" value="ECO:0007669"/>
    <property type="project" value="UniProtKB-UniRule"/>
</dbReference>
<dbReference type="GO" id="GO:0003735">
    <property type="term" value="F:structural constituent of ribosome"/>
    <property type="evidence" value="ECO:0007669"/>
    <property type="project" value="InterPro"/>
</dbReference>
<dbReference type="GO" id="GO:0042274">
    <property type="term" value="P:ribosomal small subunit biogenesis"/>
    <property type="evidence" value="ECO:0007669"/>
    <property type="project" value="TreeGrafter"/>
</dbReference>
<dbReference type="GO" id="GO:0006412">
    <property type="term" value="P:translation"/>
    <property type="evidence" value="ECO:0007669"/>
    <property type="project" value="UniProtKB-UniRule"/>
</dbReference>
<dbReference type="CDD" id="cd00165">
    <property type="entry name" value="S4"/>
    <property type="match status" value="1"/>
</dbReference>
<dbReference type="FunFam" id="1.10.1050.10:FF:000001">
    <property type="entry name" value="30S ribosomal protein S4"/>
    <property type="match status" value="1"/>
</dbReference>
<dbReference type="FunFam" id="3.10.290.10:FF:000001">
    <property type="entry name" value="30S ribosomal protein S4"/>
    <property type="match status" value="1"/>
</dbReference>
<dbReference type="Gene3D" id="1.10.1050.10">
    <property type="entry name" value="Ribosomal Protein S4 Delta 41, Chain A, domain 1"/>
    <property type="match status" value="1"/>
</dbReference>
<dbReference type="Gene3D" id="3.10.290.10">
    <property type="entry name" value="RNA-binding S4 domain"/>
    <property type="match status" value="1"/>
</dbReference>
<dbReference type="HAMAP" id="MF_01306_B">
    <property type="entry name" value="Ribosomal_uS4_B"/>
    <property type="match status" value="1"/>
</dbReference>
<dbReference type="InterPro" id="IPR022801">
    <property type="entry name" value="Ribosomal_uS4"/>
</dbReference>
<dbReference type="InterPro" id="IPR005709">
    <property type="entry name" value="Ribosomal_uS4_bac-type"/>
</dbReference>
<dbReference type="InterPro" id="IPR018079">
    <property type="entry name" value="Ribosomal_uS4_CS"/>
</dbReference>
<dbReference type="InterPro" id="IPR001912">
    <property type="entry name" value="Ribosomal_uS4_N"/>
</dbReference>
<dbReference type="InterPro" id="IPR002942">
    <property type="entry name" value="S4_RNA-bd"/>
</dbReference>
<dbReference type="InterPro" id="IPR036986">
    <property type="entry name" value="S4_RNA-bd_sf"/>
</dbReference>
<dbReference type="NCBIfam" id="NF003717">
    <property type="entry name" value="PRK05327.1"/>
    <property type="match status" value="1"/>
</dbReference>
<dbReference type="NCBIfam" id="TIGR01017">
    <property type="entry name" value="rpsD_bact"/>
    <property type="match status" value="1"/>
</dbReference>
<dbReference type="PANTHER" id="PTHR11831">
    <property type="entry name" value="30S 40S RIBOSOMAL PROTEIN"/>
    <property type="match status" value="1"/>
</dbReference>
<dbReference type="PANTHER" id="PTHR11831:SF4">
    <property type="entry name" value="SMALL RIBOSOMAL SUBUNIT PROTEIN US4M"/>
    <property type="match status" value="1"/>
</dbReference>
<dbReference type="Pfam" id="PF00163">
    <property type="entry name" value="Ribosomal_S4"/>
    <property type="match status" value="1"/>
</dbReference>
<dbReference type="Pfam" id="PF01479">
    <property type="entry name" value="S4"/>
    <property type="match status" value="1"/>
</dbReference>
<dbReference type="SMART" id="SM01390">
    <property type="entry name" value="Ribosomal_S4"/>
    <property type="match status" value="1"/>
</dbReference>
<dbReference type="SMART" id="SM00363">
    <property type="entry name" value="S4"/>
    <property type="match status" value="1"/>
</dbReference>
<dbReference type="SUPFAM" id="SSF55174">
    <property type="entry name" value="Alpha-L RNA-binding motif"/>
    <property type="match status" value="1"/>
</dbReference>
<dbReference type="PROSITE" id="PS00632">
    <property type="entry name" value="RIBOSOMAL_S4"/>
    <property type="match status" value="1"/>
</dbReference>
<dbReference type="PROSITE" id="PS50889">
    <property type="entry name" value="S4"/>
    <property type="match status" value="1"/>
</dbReference>
<accession>A0KRP8</accession>
<name>RS4_SHESA</name>
<reference key="1">
    <citation type="submission" date="2006-09" db="EMBL/GenBank/DDBJ databases">
        <title>Complete sequence of chromosome 1 of Shewanella sp. ANA-3.</title>
        <authorList>
            <person name="Copeland A."/>
            <person name="Lucas S."/>
            <person name="Lapidus A."/>
            <person name="Barry K."/>
            <person name="Detter J.C."/>
            <person name="Glavina del Rio T."/>
            <person name="Hammon N."/>
            <person name="Israni S."/>
            <person name="Dalin E."/>
            <person name="Tice H."/>
            <person name="Pitluck S."/>
            <person name="Chertkov O."/>
            <person name="Brettin T."/>
            <person name="Bruce D."/>
            <person name="Han C."/>
            <person name="Tapia R."/>
            <person name="Gilna P."/>
            <person name="Schmutz J."/>
            <person name="Larimer F."/>
            <person name="Land M."/>
            <person name="Hauser L."/>
            <person name="Kyrpides N."/>
            <person name="Kim E."/>
            <person name="Newman D."/>
            <person name="Salticov C."/>
            <person name="Konstantinidis K."/>
            <person name="Klappenback J."/>
            <person name="Tiedje J."/>
            <person name="Richardson P."/>
        </authorList>
    </citation>
    <scope>NUCLEOTIDE SEQUENCE [LARGE SCALE GENOMIC DNA]</scope>
    <source>
        <strain>ANA-3</strain>
    </source>
</reference>
<organism>
    <name type="scientific">Shewanella sp. (strain ANA-3)</name>
    <dbReference type="NCBI Taxonomy" id="94122"/>
    <lineage>
        <taxon>Bacteria</taxon>
        <taxon>Pseudomonadati</taxon>
        <taxon>Pseudomonadota</taxon>
        <taxon>Gammaproteobacteria</taxon>
        <taxon>Alteromonadales</taxon>
        <taxon>Shewanellaceae</taxon>
        <taxon>Shewanella</taxon>
    </lineage>
</organism>
<comment type="function">
    <text evidence="1">One of the primary rRNA binding proteins, it binds directly to 16S rRNA where it nucleates assembly of the body of the 30S subunit.</text>
</comment>
<comment type="function">
    <text evidence="1">With S5 and S12 plays an important role in translational accuracy.</text>
</comment>
<comment type="subunit">
    <text evidence="1">Part of the 30S ribosomal subunit. Contacts protein S5. The interaction surface between S4 and S5 is involved in control of translational fidelity.</text>
</comment>
<comment type="similarity">
    <text evidence="1">Belongs to the universal ribosomal protein uS4 family.</text>
</comment>
<feature type="chain" id="PRO_0000293366" description="Small ribosomal subunit protein uS4">
    <location>
        <begin position="1"/>
        <end position="206"/>
    </location>
</feature>
<feature type="domain" description="S4 RNA-binding" evidence="1">
    <location>
        <begin position="96"/>
        <end position="156"/>
    </location>
</feature>
<keyword id="KW-0687">Ribonucleoprotein</keyword>
<keyword id="KW-0689">Ribosomal protein</keyword>
<keyword id="KW-0694">RNA-binding</keyword>
<keyword id="KW-0699">rRNA-binding</keyword>
<protein>
    <recommendedName>
        <fullName evidence="1">Small ribosomal subunit protein uS4</fullName>
    </recommendedName>
    <alternativeName>
        <fullName evidence="2">30S ribosomal protein S4</fullName>
    </alternativeName>
</protein>
<gene>
    <name evidence="1" type="primary">rpsD</name>
    <name type="ordered locus">Shewana3_0223</name>
</gene>
<sequence>MARYLGPKLKLSRREGTDLFLKSGVRAIDSKCKLESAPGQHGARKPRLSEYGLQLREKQKVRRIYGVLEKQFRNYYKEAARLKGNTGENLLQLLETRLDNVVYRMGFGATRAESRQLVSHKSIMVNGRVVNIPSFKVSANDVVSIREKSRTQARIKAALEVAAQREKPTWVEVDSAKMEGAFKRIPERSDLSAEINEQLIVELYSK</sequence>
<evidence type="ECO:0000255" key="1">
    <source>
        <dbReference type="HAMAP-Rule" id="MF_01306"/>
    </source>
</evidence>
<evidence type="ECO:0000305" key="2"/>